<comment type="function">
    <text evidence="1">Secreted metalloproteinase probably acting as a virulence factor.</text>
</comment>
<comment type="cofactor">
    <cofactor evidence="1">
        <name>Zn(2+)</name>
        <dbReference type="ChEBI" id="CHEBI:29105"/>
    </cofactor>
    <text evidence="1">Binds 1 zinc ion per subunit.</text>
</comment>
<comment type="subcellular location">
    <subcellularLocation>
        <location evidence="5">Secreted</location>
    </subcellularLocation>
</comment>
<comment type="similarity">
    <text evidence="6">Belongs to the peptidase M36 family.</text>
</comment>
<protein>
    <recommendedName>
        <fullName>Extracellular metalloproteinase 4</fullName>
        <ecNumber>3.4.24.-</ecNumber>
    </recommendedName>
    <alternativeName>
        <fullName>Fungalysin MEP4</fullName>
    </alternativeName>
</protein>
<keyword id="KW-0325">Glycoprotein</keyword>
<keyword id="KW-0378">Hydrolase</keyword>
<keyword id="KW-0479">Metal-binding</keyword>
<keyword id="KW-0482">Metalloprotease</keyword>
<keyword id="KW-0645">Protease</keyword>
<keyword id="KW-0964">Secreted</keyword>
<keyword id="KW-0732">Signal</keyword>
<keyword id="KW-0843">Virulence</keyword>
<keyword id="KW-0862">Zinc</keyword>
<keyword id="KW-0865">Zymogen</keyword>
<gene>
    <name type="primary">MEP4</name>
</gene>
<reference key="1">
    <citation type="journal article" date="2004" name="Microbiology">
        <title>Multiplication of an ancestral gene encoding secreted fungalysin preceded species differentiation in the dermatophytes Trichophyton and Microsporum.</title>
        <authorList>
            <person name="Jousson O."/>
            <person name="Lechenne B."/>
            <person name="Bontems O."/>
            <person name="Capoccia S."/>
            <person name="Mignon B."/>
            <person name="Barblan J."/>
            <person name="Quadroni M."/>
            <person name="Monod M."/>
        </authorList>
    </citation>
    <scope>NUCLEOTIDE SEQUENCE [GENOMIC DNA]</scope>
    <scope>IDENTIFICATION BY MASS SPECTROMETRY</scope>
    <scope>SUBCELLULAR LOCATION</scope>
</reference>
<organism>
    <name type="scientific">Arthroderma benhamiae</name>
    <name type="common">Trichophyton mentagrophytes</name>
    <dbReference type="NCBI Taxonomy" id="63400"/>
    <lineage>
        <taxon>Eukaryota</taxon>
        <taxon>Fungi</taxon>
        <taxon>Dikarya</taxon>
        <taxon>Ascomycota</taxon>
        <taxon>Pezizomycotina</taxon>
        <taxon>Eurotiomycetes</taxon>
        <taxon>Eurotiomycetidae</taxon>
        <taxon>Onygenales</taxon>
        <taxon>Arthrodermataceae</taxon>
        <taxon>Trichophyton</taxon>
    </lineage>
</organism>
<accession>Q6WIH1</accession>
<dbReference type="EC" id="3.4.24.-"/>
<dbReference type="EMBL" id="AY283576">
    <property type="protein sequence ID" value="AAQ21101.1"/>
    <property type="molecule type" value="Genomic_DNA"/>
</dbReference>
<dbReference type="SMR" id="Q6WIH1"/>
<dbReference type="MEROPS" id="M36.001"/>
<dbReference type="GlyCosmos" id="Q6WIH1">
    <property type="glycosylation" value="4 sites, No reported glycans"/>
</dbReference>
<dbReference type="PHI-base" id="PHI:4973"/>
<dbReference type="GO" id="GO:0005576">
    <property type="term" value="C:extracellular region"/>
    <property type="evidence" value="ECO:0007669"/>
    <property type="project" value="UniProtKB-SubCell"/>
</dbReference>
<dbReference type="GO" id="GO:0004222">
    <property type="term" value="F:metalloendopeptidase activity"/>
    <property type="evidence" value="ECO:0007669"/>
    <property type="project" value="InterPro"/>
</dbReference>
<dbReference type="GO" id="GO:0008270">
    <property type="term" value="F:zinc ion binding"/>
    <property type="evidence" value="ECO:0007669"/>
    <property type="project" value="InterPro"/>
</dbReference>
<dbReference type="GO" id="GO:0006508">
    <property type="term" value="P:proteolysis"/>
    <property type="evidence" value="ECO:0007669"/>
    <property type="project" value="UniProtKB-KW"/>
</dbReference>
<dbReference type="CDD" id="cd09596">
    <property type="entry name" value="M36"/>
    <property type="match status" value="1"/>
</dbReference>
<dbReference type="Gene3D" id="3.10.170.10">
    <property type="match status" value="1"/>
</dbReference>
<dbReference type="Gene3D" id="1.10.390.10">
    <property type="entry name" value="Neutral Protease Domain 2"/>
    <property type="match status" value="1"/>
</dbReference>
<dbReference type="InterPro" id="IPR011096">
    <property type="entry name" value="FTP_domain"/>
</dbReference>
<dbReference type="InterPro" id="IPR050371">
    <property type="entry name" value="Fungal_virulence_M36"/>
</dbReference>
<dbReference type="InterPro" id="IPR001842">
    <property type="entry name" value="Peptidase_M36"/>
</dbReference>
<dbReference type="InterPro" id="IPR027268">
    <property type="entry name" value="Peptidase_M4/M1_CTD_sf"/>
</dbReference>
<dbReference type="PANTHER" id="PTHR33478">
    <property type="entry name" value="EXTRACELLULAR METALLOPROTEINASE MEP"/>
    <property type="match status" value="1"/>
</dbReference>
<dbReference type="PANTHER" id="PTHR33478:SF1">
    <property type="entry name" value="EXTRACELLULAR METALLOPROTEINASE MEP"/>
    <property type="match status" value="1"/>
</dbReference>
<dbReference type="Pfam" id="PF07504">
    <property type="entry name" value="FTP"/>
    <property type="match status" value="1"/>
</dbReference>
<dbReference type="Pfam" id="PF02128">
    <property type="entry name" value="Peptidase_M36"/>
    <property type="match status" value="1"/>
</dbReference>
<dbReference type="PRINTS" id="PR00999">
    <property type="entry name" value="FUNGALYSIN"/>
</dbReference>
<dbReference type="SUPFAM" id="SSF55486">
    <property type="entry name" value="Metalloproteases ('zincins'), catalytic domain"/>
    <property type="match status" value="1"/>
</dbReference>
<dbReference type="PROSITE" id="PS00142">
    <property type="entry name" value="ZINC_PROTEASE"/>
    <property type="match status" value="1"/>
</dbReference>
<proteinExistence type="evidence at protein level"/>
<sequence length="643" mass="70641">MHGLLLAGLLALPLNVLAHPTESHSSGISRRAIDITSYRLPQISKYTKSDAVPKQDDESFTTSSTGDDNVSSGDYVTTATDWLKKTLPKATYRLVNDHYIGDSGIGHVHFRQTAHGIDIDNTDFNVNIGRDGKVFSFGNSFYDGEIPKANPMVKRDFSDPVNALQGAIQTLNLPVTAKPENVKAKPVEGKENFKFEGTSGAFSDPKAQLVYLQKDGGLVLSWKVETDIGDNWLLTYVDANKNDKVHSVVDYVSAAEYKVYPWGINDPTEGNRTSIHLPWFKTLSTDWHIDGKGWYSTTRGNNAIAQENPTGGPEYENNYRPKSPLFIFKYPYSEAMTPPSSYRDASITQLFYTTNVYHDVLYILGFNEKAGNFQVNNWNKGGVGGDFAILNSQDGSGVNNANFATPPDGQPGRMRMYTWNASTPERDGCFEAGIVIHEYTHGVSNRLTGGPANSRCLAALESGGMGEGWSDFFATAIRLKAGDTRATDYTMGEWASNRPNGIRKYRYSTNLTTNPHMYVDADGLTSVHAIGTIWASMLYELLWNLIDKHGKGNVTKVRPVLKNGVPTDGRHLAMKLVLDGMALQPCLPNFVQARDAILDADKVLTQGSNKCEIWKAFAKRGLGVGAVFNPSKRTGSNELPAGC</sequence>
<name>MEP4_ARTBE</name>
<evidence type="ECO:0000250" key="1"/>
<evidence type="ECO:0000255" key="2"/>
<evidence type="ECO:0000255" key="3">
    <source>
        <dbReference type="PROSITE-ProRule" id="PRU10095"/>
    </source>
</evidence>
<evidence type="ECO:0000256" key="4">
    <source>
        <dbReference type="SAM" id="MobiDB-lite"/>
    </source>
</evidence>
<evidence type="ECO:0000269" key="5">
    <source>
    </source>
</evidence>
<evidence type="ECO:0000305" key="6"/>
<feature type="signal peptide" evidence="2">
    <location>
        <begin position="1"/>
        <end position="18"/>
    </location>
</feature>
<feature type="propeptide" id="PRO_0000380860" evidence="1">
    <location>
        <begin position="19"/>
        <end position="254"/>
    </location>
</feature>
<feature type="chain" id="PRO_0000380861" description="Extracellular metalloproteinase 4">
    <location>
        <begin position="255"/>
        <end position="643"/>
    </location>
</feature>
<feature type="region of interest" description="Disordered" evidence="4">
    <location>
        <begin position="47"/>
        <end position="71"/>
    </location>
</feature>
<feature type="compositionally biased region" description="Basic and acidic residues" evidence="4">
    <location>
        <begin position="47"/>
        <end position="57"/>
    </location>
</feature>
<feature type="compositionally biased region" description="Polar residues" evidence="4">
    <location>
        <begin position="60"/>
        <end position="71"/>
    </location>
</feature>
<feature type="active site" evidence="3">
    <location>
        <position position="438"/>
    </location>
</feature>
<feature type="binding site" evidence="3">
    <location>
        <position position="437"/>
    </location>
    <ligand>
        <name>Zn(2+)</name>
        <dbReference type="ChEBI" id="CHEBI:29105"/>
        <note>catalytic</note>
    </ligand>
</feature>
<feature type="binding site" evidence="3">
    <location>
        <position position="441"/>
    </location>
    <ligand>
        <name>Zn(2+)</name>
        <dbReference type="ChEBI" id="CHEBI:29105"/>
        <note>catalytic</note>
    </ligand>
</feature>
<feature type="glycosylation site" description="N-linked (GlcNAc...) asparagine" evidence="2">
    <location>
        <position position="271"/>
    </location>
</feature>
<feature type="glycosylation site" description="N-linked (GlcNAc...) asparagine" evidence="2">
    <location>
        <position position="420"/>
    </location>
</feature>
<feature type="glycosylation site" description="N-linked (GlcNAc...) asparagine" evidence="2">
    <location>
        <position position="510"/>
    </location>
</feature>
<feature type="glycosylation site" description="N-linked (GlcNAc...) asparagine" evidence="2">
    <location>
        <position position="553"/>
    </location>
</feature>